<dbReference type="EMBL" id="CP000462">
    <property type="protein sequence ID" value="ABK38621.1"/>
    <property type="molecule type" value="Genomic_DNA"/>
</dbReference>
<dbReference type="RefSeq" id="WP_011705080.1">
    <property type="nucleotide sequence ID" value="NC_008570.1"/>
</dbReference>
<dbReference type="RefSeq" id="YP_855699.1">
    <property type="nucleotide sequence ID" value="NC_008570.1"/>
</dbReference>
<dbReference type="SMR" id="A0KHE8"/>
<dbReference type="STRING" id="380703.AHA_1158"/>
<dbReference type="EnsemblBacteria" id="ABK38621">
    <property type="protein sequence ID" value="ABK38621"/>
    <property type="gene ID" value="AHA_1158"/>
</dbReference>
<dbReference type="GeneID" id="4489582"/>
<dbReference type="KEGG" id="aha:AHA_1158"/>
<dbReference type="PATRIC" id="fig|380703.7.peg.1163"/>
<dbReference type="eggNOG" id="ENOG502ZCMR">
    <property type="taxonomic scope" value="Bacteria"/>
</dbReference>
<dbReference type="HOGENOM" id="CLU_121866_0_0_6"/>
<dbReference type="OrthoDB" id="5599437at2"/>
<dbReference type="Proteomes" id="UP000000756">
    <property type="component" value="Chromosome"/>
</dbReference>
<dbReference type="GO" id="GO:0009898">
    <property type="term" value="C:cytoplasmic side of plasma membrane"/>
    <property type="evidence" value="ECO:0007669"/>
    <property type="project" value="InterPro"/>
</dbReference>
<dbReference type="CDD" id="cd16323">
    <property type="entry name" value="Syd"/>
    <property type="match status" value="1"/>
</dbReference>
<dbReference type="Gene3D" id="3.40.1580.20">
    <property type="entry name" value="Syd protein"/>
    <property type="match status" value="1"/>
</dbReference>
<dbReference type="HAMAP" id="MF_01104">
    <property type="entry name" value="Syd"/>
    <property type="match status" value="1"/>
</dbReference>
<dbReference type="InterPro" id="IPR009948">
    <property type="entry name" value="Syd"/>
</dbReference>
<dbReference type="InterPro" id="IPR038228">
    <property type="entry name" value="Syd_sf"/>
</dbReference>
<dbReference type="NCBIfam" id="NF003439">
    <property type="entry name" value="PRK04968.1"/>
    <property type="match status" value="1"/>
</dbReference>
<dbReference type="Pfam" id="PF07348">
    <property type="entry name" value="Syd"/>
    <property type="match status" value="1"/>
</dbReference>
<proteinExistence type="inferred from homology"/>
<keyword id="KW-0997">Cell inner membrane</keyword>
<keyword id="KW-1003">Cell membrane</keyword>
<keyword id="KW-0472">Membrane</keyword>
<keyword id="KW-1185">Reference proteome</keyword>
<name>SYDP_AERHH</name>
<feature type="chain" id="PRO_0000298245" description="Protein Syd">
    <location>
        <begin position="1"/>
        <end position="182"/>
    </location>
</feature>
<gene>
    <name evidence="1" type="primary">syd</name>
    <name type="ordered locus">AHA_1158</name>
</gene>
<evidence type="ECO:0000255" key="1">
    <source>
        <dbReference type="HAMAP-Rule" id="MF_01104"/>
    </source>
</evidence>
<comment type="function">
    <text evidence="1">Interacts with the SecY protein in vivo. May bind preferentially to an uncomplexed state of SecY, thus functioning either as a chelating agent for excess SecY in the cell or as a regulatory factor that negatively controls the translocase function.</text>
</comment>
<comment type="subcellular location">
    <subcellularLocation>
        <location evidence="1">Cell inner membrane</location>
        <topology evidence="1">Peripheral membrane protein</topology>
        <orientation evidence="1">Cytoplasmic side</orientation>
    </subcellularLocation>
    <text evidence="1">Loosely associated with the cytoplasmic side of the inner membrane, probably via SecY.</text>
</comment>
<comment type="similarity">
    <text evidence="1">Belongs to the Syd family.</text>
</comment>
<protein>
    <recommendedName>
        <fullName evidence="1">Protein Syd</fullName>
    </recommendedName>
</protein>
<reference key="1">
    <citation type="journal article" date="2006" name="J. Bacteriol.">
        <title>Genome sequence of Aeromonas hydrophila ATCC 7966T: jack of all trades.</title>
        <authorList>
            <person name="Seshadri R."/>
            <person name="Joseph S.W."/>
            <person name="Chopra A.K."/>
            <person name="Sha J."/>
            <person name="Shaw J."/>
            <person name="Graf J."/>
            <person name="Haft D.H."/>
            <person name="Wu M."/>
            <person name="Ren Q."/>
            <person name="Rosovitz M.J."/>
            <person name="Madupu R."/>
            <person name="Tallon L."/>
            <person name="Kim M."/>
            <person name="Jin S."/>
            <person name="Vuong H."/>
            <person name="Stine O.C."/>
            <person name="Ali A."/>
            <person name="Horneman A.J."/>
            <person name="Heidelberg J.F."/>
        </authorList>
    </citation>
    <scope>NUCLEOTIDE SEQUENCE [LARGE SCALE GENOMIC DNA]</scope>
    <source>
        <strain>ATCC 7966 / DSM 30187 / BCRC 13018 / CCUG 14551 / JCM 1027 / KCTC 2358 / NCIMB 9240 / NCTC 8049</strain>
    </source>
</reference>
<accession>A0KHE8</accession>
<organism>
    <name type="scientific">Aeromonas hydrophila subsp. hydrophila (strain ATCC 7966 / DSM 30187 / BCRC 13018 / CCUG 14551 / JCM 1027 / KCTC 2358 / NCIMB 9240 / NCTC 8049)</name>
    <dbReference type="NCBI Taxonomy" id="380703"/>
    <lineage>
        <taxon>Bacteria</taxon>
        <taxon>Pseudomonadati</taxon>
        <taxon>Pseudomonadota</taxon>
        <taxon>Gammaproteobacteria</taxon>
        <taxon>Aeromonadales</taxon>
        <taxon>Aeromonadaceae</taxon>
        <taxon>Aeromonas</taxon>
    </lineage>
</organism>
<sequence length="182" mass="21072">MSDQVLSALEHFFLRWQRDGEARRGLPLCEWEADWRSPCELDEPKEGRVAWRPHRRAEPADFTAMNEALELTLHPAAQALFGGWFSRPVPCLYKGLRLEFVLPWNEADLDLLKENLIGHLLMLRKLKRSPSLFIATTRNEMTLVSLDNESGQVWLEWLDSGRRLVLAPSLPAFLERLETLPQ</sequence>